<protein>
    <recommendedName>
        <fullName>Uncharacterized membrane protein YFL051C</fullName>
    </recommendedName>
</protein>
<dbReference type="EMBL" id="D50617">
    <property type="protein sequence ID" value="BAA09190.1"/>
    <property type="molecule type" value="Genomic_DNA"/>
</dbReference>
<dbReference type="EMBL" id="AY558469">
    <property type="protein sequence ID" value="AAS56795.1"/>
    <property type="molecule type" value="Genomic_DNA"/>
</dbReference>
<dbReference type="EMBL" id="BK006940">
    <property type="protein sequence ID" value="DAA12389.1"/>
    <property type="molecule type" value="Genomic_DNA"/>
</dbReference>
<dbReference type="PIR" id="S56204">
    <property type="entry name" value="S56204"/>
</dbReference>
<dbReference type="RefSeq" id="NP_116576.1">
    <property type="nucleotide sequence ID" value="NM_001179916.1"/>
</dbReference>
<dbReference type="SMR" id="P43552"/>
<dbReference type="BioGRID" id="31096">
    <property type="interactions" value="78"/>
</dbReference>
<dbReference type="DIP" id="DIP-4270N"/>
<dbReference type="FunCoup" id="P43552">
    <property type="interactions" value="40"/>
</dbReference>
<dbReference type="IntAct" id="P43552">
    <property type="interactions" value="1"/>
</dbReference>
<dbReference type="STRING" id="4932.YFL051C"/>
<dbReference type="PaxDb" id="4932-YFL051C"/>
<dbReference type="EnsemblFungi" id="YFL051C_mRNA">
    <property type="protein sequence ID" value="YFL051C"/>
    <property type="gene ID" value="YFL051C"/>
</dbReference>
<dbReference type="GeneID" id="850493"/>
<dbReference type="KEGG" id="sce:YFL051C"/>
<dbReference type="AGR" id="SGD:S000001843"/>
<dbReference type="SGD" id="S000001843">
    <property type="gene designation" value="YFL051C"/>
</dbReference>
<dbReference type="VEuPathDB" id="FungiDB:YFL051C"/>
<dbReference type="GeneTree" id="ENSGT00940000180757"/>
<dbReference type="HOGENOM" id="CLU_1590435_0_0_1"/>
<dbReference type="InParanoid" id="P43552"/>
<dbReference type="OrthoDB" id="4070698at2759"/>
<dbReference type="BioCyc" id="YEAST:G3O-30414-MONOMER"/>
<dbReference type="BioGRID-ORCS" id="850493">
    <property type="hits" value="3 hits in 10 CRISPR screens"/>
</dbReference>
<dbReference type="PRO" id="PR:P43552"/>
<dbReference type="Proteomes" id="UP000002311">
    <property type="component" value="Chromosome VI"/>
</dbReference>
<dbReference type="RNAct" id="P43552">
    <property type="molecule type" value="protein"/>
</dbReference>
<dbReference type="GO" id="GO:0071944">
    <property type="term" value="C:cell periphery"/>
    <property type="evidence" value="ECO:0007005"/>
    <property type="project" value="SGD"/>
</dbReference>
<dbReference type="GO" id="GO:0005886">
    <property type="term" value="C:plasma membrane"/>
    <property type="evidence" value="ECO:0007669"/>
    <property type="project" value="UniProtKB-SubCell"/>
</dbReference>
<dbReference type="FunFam" id="2.60.120.1560:FF:000002">
    <property type="entry name" value="Flocculation protein FLO10"/>
    <property type="match status" value="1"/>
</dbReference>
<dbReference type="Gene3D" id="2.60.120.1560">
    <property type="match status" value="2"/>
</dbReference>
<gene>
    <name type="ordered locus">YFL051C</name>
</gene>
<keyword id="KW-1003">Cell membrane</keyword>
<keyword id="KW-0472">Membrane</keyword>
<keyword id="KW-1185">Reference proteome</keyword>
<keyword id="KW-0732">Signal</keyword>
<keyword id="KW-0812">Transmembrane</keyword>
<keyword id="KW-1133">Transmembrane helix</keyword>
<comment type="subcellular location">
    <subcellularLocation>
        <location>Cell membrane</location>
        <topology>Single-pass membrane protein</topology>
    </subcellularLocation>
</comment>
<comment type="similarity">
    <text evidence="2">To yeast protein FLO1.</text>
</comment>
<name>YFF1_YEAST</name>
<feature type="signal peptide" evidence="1">
    <location>
        <begin position="1"/>
        <end position="23"/>
    </location>
</feature>
<feature type="chain" id="PRO_0000014318" description="Uncharacterized membrane protein YFL051C">
    <location>
        <begin position="24"/>
        <end position="160"/>
    </location>
</feature>
<feature type="topological domain" description="Cytoplasmic" evidence="1">
    <location>
        <begin position="24"/>
        <end position="132"/>
    </location>
</feature>
<feature type="transmembrane region" description="Helical" evidence="1">
    <location>
        <begin position="133"/>
        <end position="155"/>
    </location>
</feature>
<feature type="topological domain" description="Extracellular" evidence="1">
    <location>
        <begin position="156"/>
        <end position="160"/>
    </location>
</feature>
<proteinExistence type="evidence at protein level"/>
<evidence type="ECO:0000255" key="1"/>
<evidence type="ECO:0000305" key="2"/>
<sequence>MSIPHSVFSALLVFVALATTTLASTEACLPTNKREDGMNINFYEYTIGDQTTYLEPEYMGYEYSNTKKLGSVSGQTNLSIYYSPPCESTPTCVTYAVLKRDEDGYDPCGPLYETKKRDTEYCDPNTAYWSSDLFGFYTTPTNVTVEMTGYLIWSMGNRRR</sequence>
<accession>P43552</accession>
<accession>D6VTH9</accession>
<reference key="1">
    <citation type="journal article" date="1995" name="Nat. Genet.">
        <title>Analysis of the nucleotide sequence of chromosome VI from Saccharomyces cerevisiae.</title>
        <authorList>
            <person name="Murakami Y."/>
            <person name="Naitou M."/>
            <person name="Hagiwara H."/>
            <person name="Shibata T."/>
            <person name="Ozawa M."/>
            <person name="Sasanuma S."/>
            <person name="Sasanuma M."/>
            <person name="Tsuchiya Y."/>
            <person name="Soeda E."/>
            <person name="Yokoyama K."/>
            <person name="Yamazaki M."/>
            <person name="Tashiro H."/>
            <person name="Eki T."/>
        </authorList>
    </citation>
    <scope>NUCLEOTIDE SEQUENCE [LARGE SCALE GENOMIC DNA]</scope>
    <source>
        <strain>ATCC 204508 / S288c</strain>
    </source>
</reference>
<reference key="2">
    <citation type="journal article" date="2014" name="G3 (Bethesda)">
        <title>The reference genome sequence of Saccharomyces cerevisiae: Then and now.</title>
        <authorList>
            <person name="Engel S.R."/>
            <person name="Dietrich F.S."/>
            <person name="Fisk D.G."/>
            <person name="Binkley G."/>
            <person name="Balakrishnan R."/>
            <person name="Costanzo M.C."/>
            <person name="Dwight S.S."/>
            <person name="Hitz B.C."/>
            <person name="Karra K."/>
            <person name="Nash R.S."/>
            <person name="Weng S."/>
            <person name="Wong E.D."/>
            <person name="Lloyd P."/>
            <person name="Skrzypek M.S."/>
            <person name="Miyasato S.R."/>
            <person name="Simison M."/>
            <person name="Cherry J.M."/>
        </authorList>
    </citation>
    <scope>GENOME REANNOTATION</scope>
    <source>
        <strain>ATCC 204508 / S288c</strain>
    </source>
</reference>
<reference key="3">
    <citation type="journal article" date="2007" name="Genome Res.">
        <title>Approaching a complete repository of sequence-verified protein-encoding clones for Saccharomyces cerevisiae.</title>
        <authorList>
            <person name="Hu Y."/>
            <person name="Rolfs A."/>
            <person name="Bhullar B."/>
            <person name="Murthy T.V.S."/>
            <person name="Zhu C."/>
            <person name="Berger M.F."/>
            <person name="Camargo A.A."/>
            <person name="Kelley F."/>
            <person name="McCarron S."/>
            <person name="Jepson D."/>
            <person name="Richardson A."/>
            <person name="Raphael J."/>
            <person name="Moreira D."/>
            <person name="Taycher E."/>
            <person name="Zuo D."/>
            <person name="Mohr S."/>
            <person name="Kane M.F."/>
            <person name="Williamson J."/>
            <person name="Simpson A.J.G."/>
            <person name="Bulyk M.L."/>
            <person name="Harlow E."/>
            <person name="Marsischky G."/>
            <person name="Kolodner R.D."/>
            <person name="LaBaer J."/>
        </authorList>
    </citation>
    <scope>NUCLEOTIDE SEQUENCE [GENOMIC DNA]</scope>
    <source>
        <strain>ATCC 204508 / S288c</strain>
    </source>
</reference>
<reference key="4">
    <citation type="journal article" date="2006" name="Proc. Natl. Acad. Sci. U.S.A.">
        <title>A global topology map of the Saccharomyces cerevisiae membrane proteome.</title>
        <authorList>
            <person name="Kim H."/>
            <person name="Melen K."/>
            <person name="Oesterberg M."/>
            <person name="von Heijne G."/>
        </authorList>
    </citation>
    <scope>TOPOLOGY [LARGE SCALE ANALYSIS]</scope>
    <source>
        <strain>ATCC 208353 / W303-1A</strain>
    </source>
</reference>
<organism>
    <name type="scientific">Saccharomyces cerevisiae (strain ATCC 204508 / S288c)</name>
    <name type="common">Baker's yeast</name>
    <dbReference type="NCBI Taxonomy" id="559292"/>
    <lineage>
        <taxon>Eukaryota</taxon>
        <taxon>Fungi</taxon>
        <taxon>Dikarya</taxon>
        <taxon>Ascomycota</taxon>
        <taxon>Saccharomycotina</taxon>
        <taxon>Saccharomycetes</taxon>
        <taxon>Saccharomycetales</taxon>
        <taxon>Saccharomycetaceae</taxon>
        <taxon>Saccharomyces</taxon>
    </lineage>
</organism>